<comment type="function">
    <text evidence="1">Bidirectionally degrades single-stranded DNA into large acid-insoluble oligonucleotides, which are then degraded further into small acid-soluble oligonucleotides.</text>
</comment>
<comment type="catalytic activity">
    <reaction evidence="1">
        <text>Exonucleolytic cleavage in either 5'- to 3'- or 3'- to 5'-direction to yield nucleoside 5'-phosphates.</text>
        <dbReference type="EC" id="3.1.11.6"/>
    </reaction>
</comment>
<comment type="subunit">
    <text evidence="1">Heterooligomer composed of large and small subunits.</text>
</comment>
<comment type="subcellular location">
    <subcellularLocation>
        <location evidence="1">Cytoplasm</location>
    </subcellularLocation>
</comment>
<comment type="similarity">
    <text evidence="1">Belongs to the XseA family.</text>
</comment>
<accession>B2TXT4</accession>
<protein>
    <recommendedName>
        <fullName evidence="1">Exodeoxyribonuclease 7 large subunit</fullName>
        <ecNumber evidence="1">3.1.11.6</ecNumber>
    </recommendedName>
    <alternativeName>
        <fullName evidence="1">Exodeoxyribonuclease VII large subunit</fullName>
        <shortName evidence="1">Exonuclease VII large subunit</shortName>
    </alternativeName>
</protein>
<name>EX7L_SHIB3</name>
<gene>
    <name evidence="1" type="primary">xseA</name>
    <name type="ordered locus">SbBS512_E2885</name>
</gene>
<keyword id="KW-0963">Cytoplasm</keyword>
<keyword id="KW-0269">Exonuclease</keyword>
<keyword id="KW-0378">Hydrolase</keyword>
<keyword id="KW-0540">Nuclease</keyword>
<keyword id="KW-1185">Reference proteome</keyword>
<evidence type="ECO:0000255" key="1">
    <source>
        <dbReference type="HAMAP-Rule" id="MF_00378"/>
    </source>
</evidence>
<dbReference type="EC" id="3.1.11.6" evidence="1"/>
<dbReference type="EMBL" id="CP001063">
    <property type="protein sequence ID" value="ACD07663.1"/>
    <property type="molecule type" value="Genomic_DNA"/>
</dbReference>
<dbReference type="RefSeq" id="WP_000937933.1">
    <property type="nucleotide sequence ID" value="NC_010658.1"/>
</dbReference>
<dbReference type="SMR" id="B2TXT4"/>
<dbReference type="STRING" id="344609.SbBS512_E2885"/>
<dbReference type="GeneID" id="93774627"/>
<dbReference type="KEGG" id="sbc:SbBS512_E2885"/>
<dbReference type="HOGENOM" id="CLU_023625_3_1_6"/>
<dbReference type="Proteomes" id="UP000001030">
    <property type="component" value="Chromosome"/>
</dbReference>
<dbReference type="GO" id="GO:0005737">
    <property type="term" value="C:cytoplasm"/>
    <property type="evidence" value="ECO:0007669"/>
    <property type="project" value="UniProtKB-SubCell"/>
</dbReference>
<dbReference type="GO" id="GO:0009318">
    <property type="term" value="C:exodeoxyribonuclease VII complex"/>
    <property type="evidence" value="ECO:0007669"/>
    <property type="project" value="InterPro"/>
</dbReference>
<dbReference type="GO" id="GO:0008855">
    <property type="term" value="F:exodeoxyribonuclease VII activity"/>
    <property type="evidence" value="ECO:0007669"/>
    <property type="project" value="UniProtKB-UniRule"/>
</dbReference>
<dbReference type="GO" id="GO:0003676">
    <property type="term" value="F:nucleic acid binding"/>
    <property type="evidence" value="ECO:0007669"/>
    <property type="project" value="InterPro"/>
</dbReference>
<dbReference type="GO" id="GO:0006308">
    <property type="term" value="P:DNA catabolic process"/>
    <property type="evidence" value="ECO:0007669"/>
    <property type="project" value="UniProtKB-UniRule"/>
</dbReference>
<dbReference type="CDD" id="cd04489">
    <property type="entry name" value="ExoVII_LU_OBF"/>
    <property type="match status" value="1"/>
</dbReference>
<dbReference type="HAMAP" id="MF_00378">
    <property type="entry name" value="Exonuc_7_L"/>
    <property type="match status" value="1"/>
</dbReference>
<dbReference type="InterPro" id="IPR003753">
    <property type="entry name" value="Exonuc_VII_L"/>
</dbReference>
<dbReference type="InterPro" id="IPR020579">
    <property type="entry name" value="Exonuc_VII_lsu_C"/>
</dbReference>
<dbReference type="InterPro" id="IPR025824">
    <property type="entry name" value="OB-fold_nuc-bd_dom"/>
</dbReference>
<dbReference type="NCBIfam" id="TIGR00237">
    <property type="entry name" value="xseA"/>
    <property type="match status" value="1"/>
</dbReference>
<dbReference type="PANTHER" id="PTHR30008">
    <property type="entry name" value="EXODEOXYRIBONUCLEASE 7 LARGE SUBUNIT"/>
    <property type="match status" value="1"/>
</dbReference>
<dbReference type="PANTHER" id="PTHR30008:SF0">
    <property type="entry name" value="EXODEOXYRIBONUCLEASE 7 LARGE SUBUNIT"/>
    <property type="match status" value="1"/>
</dbReference>
<dbReference type="Pfam" id="PF02601">
    <property type="entry name" value="Exonuc_VII_L"/>
    <property type="match status" value="1"/>
</dbReference>
<dbReference type="Pfam" id="PF13742">
    <property type="entry name" value="tRNA_anti_2"/>
    <property type="match status" value="1"/>
</dbReference>
<feature type="chain" id="PRO_1000122089" description="Exodeoxyribonuclease 7 large subunit">
    <location>
        <begin position="1"/>
        <end position="456"/>
    </location>
</feature>
<reference key="1">
    <citation type="submission" date="2008-05" db="EMBL/GenBank/DDBJ databases">
        <title>Complete sequence of Shigella boydii serotype 18 strain BS512.</title>
        <authorList>
            <person name="Rasko D.A."/>
            <person name="Rosovitz M."/>
            <person name="Maurelli A.T."/>
            <person name="Myers G."/>
            <person name="Seshadri R."/>
            <person name="Cer R."/>
            <person name="Jiang L."/>
            <person name="Ravel J."/>
            <person name="Sebastian Y."/>
        </authorList>
    </citation>
    <scope>NUCLEOTIDE SEQUENCE [LARGE SCALE GENOMIC DNA]</scope>
    <source>
        <strain>CDC 3083-94 / BS512</strain>
    </source>
</reference>
<proteinExistence type="inferred from homology"/>
<organism>
    <name type="scientific">Shigella boydii serotype 18 (strain CDC 3083-94 / BS512)</name>
    <dbReference type="NCBI Taxonomy" id="344609"/>
    <lineage>
        <taxon>Bacteria</taxon>
        <taxon>Pseudomonadati</taxon>
        <taxon>Pseudomonadota</taxon>
        <taxon>Gammaproteobacteria</taxon>
        <taxon>Enterobacterales</taxon>
        <taxon>Enterobacteriaceae</taxon>
        <taxon>Shigella</taxon>
    </lineage>
</organism>
<sequence>MLPSQSPAIFTVSRLNQTVRLLLEHEMGQVWISGEISNFTQPASGHWYFTLKDDTAQVRCAMFRNSNRRVTFRPQHGQQVLVRANITLYEPRGDYQIIVESMQPAGEGLLQQKYEQLKAKLQAEGLFDQQYKKPLPSPAHCVGVITSKTGAALHDILHVLKRRDPSLPVIIYPTAVQGDDAPGQIVRAIELANQRNECDVLIVGRGGGSLEDLWSFNDERVARAIFASRIPVVSAVGHETDVTIADFVADLRAPTPSAAAEVVSRNQQELLRQVQSTRQRLEMAMDYYLANRTRRFTQIHHRLQQQHPQLRLARQQTMLERLQKRMSFALENQLKRTGQQQQRLTQRLNQQNPQPKIHRAQTRIQQLEYRLAETLRVQLSATRERFGNAVTHLEAVSPLSTLARGYSVTTATDGNVLKKVKQVKAGEMLTTRLEDGWIESEVKNIQPVKKSRKKVH</sequence>